<feature type="signal peptide" evidence="5">
    <location>
        <begin position="1"/>
        <end position="26"/>
    </location>
</feature>
<feature type="chain" id="PRO_5010896427" description="Acylcarnitine hydrolase" evidence="5">
    <location>
        <begin position="27"/>
        <end position="561"/>
    </location>
</feature>
<feature type="active site" description="Acyl-ester intermediate" evidence="4">
    <location>
        <position position="230"/>
    </location>
</feature>
<feature type="active site" description="Charge relay system" evidence="1">
    <location>
        <position position="347"/>
    </location>
</feature>
<feature type="active site" description="Charge relay system" evidence="1">
    <location>
        <position position="459"/>
    </location>
</feature>
<feature type="disulfide bond" evidence="1">
    <location>
        <begin position="97"/>
        <end position="125"/>
    </location>
</feature>
<feature type="disulfide bond" evidence="1">
    <location>
        <begin position="282"/>
        <end position="293"/>
    </location>
</feature>
<feature type="sequence conflict" description="In Ref. 4; EDL94590." evidence="7" ref="4">
    <original>H</original>
    <variation>R</variation>
    <location>
        <position position="335"/>
    </location>
</feature>
<sequence>MARKQPHSWLNAVLFGLLLILIHVWGQDSPESSSIRTTHTGQVRGKLDHVRDTKAGVHTFLGIPFAKAPVGPLRFAPPEDPEPWSGVRDGTSHPAMCLQNIDMLDEVGLTDMKMILSSIPMSEDCLYLNIYTPAHAHEGSNLPVMVCIHGGALVIGMASMCDGSLLAVNEDLVVVAIQYRLGVLGFFSTGDEHARGNWGYLDQVAALRWVQQNIAHFGGNPNRVTIFGVSAGGTSVSSHVISPMSQGLFHGAIMESGVALLPDLISETSETVSTTVAKLSGCEATDSETLVRCLRAKSGAEILVINKVFKMIPAVVDGEFLPRHPKELLASEDFHPVPSIIGVNTDEYCCTIPMVMGTAQIIKELSRENLQAVLKDTAAQMMLPPECGDLLMEEYMGNTDDPQTLQIQYAEMMGDFLFVIPALQVAHFQRSHAPVYFYEFQHAPSYFKNVRPPHVKADHADEVPFVFGSFFWGIKVDFTEEEKLLSRRMMKYWANFARHGNPNSEGLPYWPVLDHDEQYLQLDTQPAVDRALKARRLQFWTKTLPQKIQELNGAQKNHAEL</sequence>
<proteinExistence type="evidence at protein level"/>
<reference evidence="9 10" key="1">
    <citation type="submission" date="1998-01" db="EMBL/GenBank/DDBJ databases">
        <title>Molecular cloning and characterization of a phenobarbital-inducible carboxylesterase in rat liver.</title>
        <authorList>
            <person name="Sone T."/>
            <person name="Sawada T."/>
            <person name="Kunitomo T."/>
            <person name="Takabatake E."/>
            <person name="Wang C.Y."/>
            <person name="Isobe M."/>
        </authorList>
    </citation>
    <scope>NUCLEOTIDE SEQUENCE [MRNA]</scope>
    <scope>NUCLEOTIDE SEQUENCE [GENOMIC DNA]</scope>
    <source>
        <strain evidence="10">Wistar</strain>
        <tissue evidence="10">Liver</tissue>
    </source>
</reference>
<reference evidence="11" key="2">
    <citation type="journal article" date="2005" name="Biochem. Pharmacol.">
        <title>Dexamethasone-induced methylprednisolone hemisuccinate hydrolase: its identification as a member of the rat carboxylesterase 2 family and its unique existence in plasma.</title>
        <authorList>
            <person name="Furihata T."/>
            <person name="Hosokawa M."/>
            <person name="Fujii A."/>
            <person name="Derbel M."/>
            <person name="Satoh T."/>
            <person name="Chiba K."/>
        </authorList>
    </citation>
    <scope>NUCLEOTIDE SEQUENCE [MRNA]</scope>
    <source>
        <strain evidence="11">Sprague-Dawley</strain>
        <tissue evidence="11">Liver</tissue>
    </source>
</reference>
<reference key="3">
    <citation type="journal article" date="2004" name="Nature">
        <title>Genome sequence of the Brown Norway rat yields insights into mammalian evolution.</title>
        <authorList>
            <person name="Gibbs R.A."/>
            <person name="Weinstock G.M."/>
            <person name="Metzker M.L."/>
            <person name="Muzny D.M."/>
            <person name="Sodergren E.J."/>
            <person name="Scherer S."/>
            <person name="Scott G."/>
            <person name="Steffen D."/>
            <person name="Worley K.C."/>
            <person name="Burch P.E."/>
            <person name="Okwuonu G."/>
            <person name="Hines S."/>
            <person name="Lewis L."/>
            <person name="Deramo C."/>
            <person name="Delgado O."/>
            <person name="Dugan-Rocha S."/>
            <person name="Miner G."/>
            <person name="Morgan M."/>
            <person name="Hawes A."/>
            <person name="Gill R."/>
            <person name="Holt R.A."/>
            <person name="Adams M.D."/>
            <person name="Amanatides P.G."/>
            <person name="Baden-Tillson H."/>
            <person name="Barnstead M."/>
            <person name="Chin S."/>
            <person name="Evans C.A."/>
            <person name="Ferriera S."/>
            <person name="Fosler C."/>
            <person name="Glodek A."/>
            <person name="Gu Z."/>
            <person name="Jennings D."/>
            <person name="Kraft C.L."/>
            <person name="Nguyen T."/>
            <person name="Pfannkoch C.M."/>
            <person name="Sitter C."/>
            <person name="Sutton G.G."/>
            <person name="Venter J.C."/>
            <person name="Woodage T."/>
            <person name="Smith D."/>
            <person name="Lee H.-M."/>
            <person name="Gustafson E."/>
            <person name="Cahill P."/>
            <person name="Kana A."/>
            <person name="Doucette-Stamm L."/>
            <person name="Weinstock K."/>
            <person name="Fechtel K."/>
            <person name="Weiss R.B."/>
            <person name="Dunn D.M."/>
            <person name="Green E.D."/>
            <person name="Blakesley R.W."/>
            <person name="Bouffard G.G."/>
            <person name="De Jong P.J."/>
            <person name="Osoegawa K."/>
            <person name="Zhu B."/>
            <person name="Marra M."/>
            <person name="Schein J."/>
            <person name="Bosdet I."/>
            <person name="Fjell C."/>
            <person name="Jones S."/>
            <person name="Krzywinski M."/>
            <person name="Mathewson C."/>
            <person name="Siddiqui A."/>
            <person name="Wye N."/>
            <person name="McPherson J."/>
            <person name="Zhao S."/>
            <person name="Fraser C.M."/>
            <person name="Shetty J."/>
            <person name="Shatsman S."/>
            <person name="Geer K."/>
            <person name="Chen Y."/>
            <person name="Abramzon S."/>
            <person name="Nierman W.C."/>
            <person name="Havlak P.H."/>
            <person name="Chen R."/>
            <person name="Durbin K.J."/>
            <person name="Egan A."/>
            <person name="Ren Y."/>
            <person name="Song X.-Z."/>
            <person name="Li B."/>
            <person name="Liu Y."/>
            <person name="Qin X."/>
            <person name="Cawley S."/>
            <person name="Cooney A.J."/>
            <person name="D'Souza L.M."/>
            <person name="Martin K."/>
            <person name="Wu J.Q."/>
            <person name="Gonzalez-Garay M.L."/>
            <person name="Jackson A.R."/>
            <person name="Kalafus K.J."/>
            <person name="McLeod M.P."/>
            <person name="Milosavljevic A."/>
            <person name="Virk D."/>
            <person name="Volkov A."/>
            <person name="Wheeler D.A."/>
            <person name="Zhang Z."/>
            <person name="Bailey J.A."/>
            <person name="Eichler E.E."/>
            <person name="Tuzun E."/>
            <person name="Birney E."/>
            <person name="Mongin E."/>
            <person name="Ureta-Vidal A."/>
            <person name="Woodwark C."/>
            <person name="Zdobnov E."/>
            <person name="Bork P."/>
            <person name="Suyama M."/>
            <person name="Torrents D."/>
            <person name="Alexandersson M."/>
            <person name="Trask B.J."/>
            <person name="Young J.M."/>
            <person name="Huang H."/>
            <person name="Wang H."/>
            <person name="Xing H."/>
            <person name="Daniels S."/>
            <person name="Gietzen D."/>
            <person name="Schmidt J."/>
            <person name="Stevens K."/>
            <person name="Vitt U."/>
            <person name="Wingrove J."/>
            <person name="Camara F."/>
            <person name="Mar Alba M."/>
            <person name="Abril J.F."/>
            <person name="Guigo R."/>
            <person name="Smit A."/>
            <person name="Dubchak I."/>
            <person name="Rubin E.M."/>
            <person name="Couronne O."/>
            <person name="Poliakov A."/>
            <person name="Huebner N."/>
            <person name="Ganten D."/>
            <person name="Goesele C."/>
            <person name="Hummel O."/>
            <person name="Kreitler T."/>
            <person name="Lee Y.-A."/>
            <person name="Monti J."/>
            <person name="Schulz H."/>
            <person name="Zimdahl H."/>
            <person name="Himmelbauer H."/>
            <person name="Lehrach H."/>
            <person name="Jacob H.J."/>
            <person name="Bromberg S."/>
            <person name="Gullings-Handley J."/>
            <person name="Jensen-Seaman M.I."/>
            <person name="Kwitek A.E."/>
            <person name="Lazar J."/>
            <person name="Pasko D."/>
            <person name="Tonellato P.J."/>
            <person name="Twigger S."/>
            <person name="Ponting C.P."/>
            <person name="Duarte J.M."/>
            <person name="Rice S."/>
            <person name="Goodstadt L."/>
            <person name="Beatson S.A."/>
            <person name="Emes R.D."/>
            <person name="Winter E.E."/>
            <person name="Webber C."/>
            <person name="Brandt P."/>
            <person name="Nyakatura G."/>
            <person name="Adetobi M."/>
            <person name="Chiaromonte F."/>
            <person name="Elnitski L."/>
            <person name="Eswara P."/>
            <person name="Hardison R.C."/>
            <person name="Hou M."/>
            <person name="Kolbe D."/>
            <person name="Makova K."/>
            <person name="Miller W."/>
            <person name="Nekrutenko A."/>
            <person name="Riemer C."/>
            <person name="Schwartz S."/>
            <person name="Taylor J."/>
            <person name="Yang S."/>
            <person name="Zhang Y."/>
            <person name="Lindpaintner K."/>
            <person name="Andrews T.D."/>
            <person name="Caccamo M."/>
            <person name="Clamp M."/>
            <person name="Clarke L."/>
            <person name="Curwen V."/>
            <person name="Durbin R.M."/>
            <person name="Eyras E."/>
            <person name="Searle S.M."/>
            <person name="Cooper G.M."/>
            <person name="Batzoglou S."/>
            <person name="Brudno M."/>
            <person name="Sidow A."/>
            <person name="Stone E.A."/>
            <person name="Payseur B.A."/>
            <person name="Bourque G."/>
            <person name="Lopez-Otin C."/>
            <person name="Puente X.S."/>
            <person name="Chakrabarti K."/>
            <person name="Chatterji S."/>
            <person name="Dewey C."/>
            <person name="Pachter L."/>
            <person name="Bray N."/>
            <person name="Yap V.B."/>
            <person name="Caspi A."/>
            <person name="Tesler G."/>
            <person name="Pevzner P.A."/>
            <person name="Haussler D."/>
            <person name="Roskin K.M."/>
            <person name="Baertsch R."/>
            <person name="Clawson H."/>
            <person name="Furey T.S."/>
            <person name="Hinrichs A.S."/>
            <person name="Karolchik D."/>
            <person name="Kent W.J."/>
            <person name="Rosenbloom K.R."/>
            <person name="Trumbower H."/>
            <person name="Weirauch M."/>
            <person name="Cooper D.N."/>
            <person name="Stenson P.D."/>
            <person name="Ma B."/>
            <person name="Brent M."/>
            <person name="Arumugam M."/>
            <person name="Shteynberg D."/>
            <person name="Copley R.R."/>
            <person name="Taylor M.S."/>
            <person name="Riethman H."/>
            <person name="Mudunuri U."/>
            <person name="Peterson J."/>
            <person name="Guyer M."/>
            <person name="Felsenfeld A."/>
            <person name="Old S."/>
            <person name="Mockrin S."/>
            <person name="Collins F.S."/>
        </authorList>
    </citation>
    <scope>NUCLEOTIDE SEQUENCE [LARGE SCALE GENOMIC DNA]</scope>
    <source>
        <strain>Brown Norway</strain>
    </source>
</reference>
<reference key="4">
    <citation type="submission" date="2005-07" db="EMBL/GenBank/DDBJ databases">
        <authorList>
            <person name="Mural R.J."/>
            <person name="Adams M.D."/>
            <person name="Myers E.W."/>
            <person name="Smith H.O."/>
            <person name="Venter J.C."/>
        </authorList>
    </citation>
    <scope>NUCLEOTIDE SEQUENCE [LARGE SCALE GENOMIC DNA]</scope>
</reference>
<reference key="5">
    <citation type="journal article" date="2002" name="Eur. J. Biochem.">
        <title>Identification of microsomal rat liver carboxylesterases and their activity with retinyl palmitate.</title>
        <authorList>
            <person name="Sanghani S.P."/>
            <person name="Davis W.I."/>
            <person name="Dumaual N.G."/>
            <person name="Mahrenholz A."/>
            <person name="Bosron W.F."/>
        </authorList>
    </citation>
    <scope>CATALYTIC ACTIVITY</scope>
    <scope>SUBCELLULAR LOCATION</scope>
    <scope>FUNCTION</scope>
    <scope>TISSUE SPECIFICITY</scope>
</reference>
<organism evidence="10">
    <name type="scientific">Rattus norvegicus</name>
    <name type="common">Rat</name>
    <dbReference type="NCBI Taxonomy" id="10116"/>
    <lineage>
        <taxon>Eukaryota</taxon>
        <taxon>Metazoa</taxon>
        <taxon>Chordata</taxon>
        <taxon>Craniata</taxon>
        <taxon>Vertebrata</taxon>
        <taxon>Euteleostomi</taxon>
        <taxon>Mammalia</taxon>
        <taxon>Eutheria</taxon>
        <taxon>Euarchontoglires</taxon>
        <taxon>Glires</taxon>
        <taxon>Rodentia</taxon>
        <taxon>Myomorpha</taxon>
        <taxon>Muroidea</taxon>
        <taxon>Muridae</taxon>
        <taxon>Murinae</taxon>
        <taxon>Rattus</taxon>
    </lineage>
</organism>
<keyword id="KW-1015">Disulfide bond</keyword>
<keyword id="KW-0256">Endoplasmic reticulum</keyword>
<keyword id="KW-0378">Hydrolase</keyword>
<keyword id="KW-0443">Lipid metabolism</keyword>
<keyword id="KW-0492">Microsome</keyword>
<keyword id="KW-1185">Reference proteome</keyword>
<keyword id="KW-0732">Signal</keyword>
<protein>
    <recommendedName>
        <fullName>Acylcarnitine hydrolase</fullName>
        <shortName>ACH M1</shortName>
        <ecNumber>3.1.1.28</ecNumber>
    </recommendedName>
    <alternativeName>
        <fullName evidence="5">Carboxylic ester hydrolase</fullName>
        <ecNumber evidence="5">3.1.1.-</ecNumber>
    </alternativeName>
</protein>
<gene>
    <name evidence="12" type="primary">Ces2c</name>
    <name evidence="12" type="synonym">Ces2</name>
    <name evidence="12" type="synonym">Ces2l</name>
</gene>
<accession>O70631</accession>
<accession>G3V9D8</accession>
<evidence type="ECO:0000250" key="1">
    <source>
        <dbReference type="UniProtKB" id="P23141"/>
    </source>
</evidence>
<evidence type="ECO:0000250" key="2">
    <source>
        <dbReference type="UniProtKB" id="Q91WG0"/>
    </source>
</evidence>
<evidence type="ECO:0000255" key="3"/>
<evidence type="ECO:0000255" key="4">
    <source>
        <dbReference type="PROSITE-ProRule" id="PRU10039"/>
    </source>
</evidence>
<evidence type="ECO:0000255" key="5">
    <source>
        <dbReference type="RuleBase" id="RU361235"/>
    </source>
</evidence>
<evidence type="ECO:0000269" key="6">
    <source>
    </source>
</evidence>
<evidence type="ECO:0000305" key="7"/>
<evidence type="ECO:0000305" key="8">
    <source>
    </source>
</evidence>
<evidence type="ECO:0000312" key="9">
    <source>
        <dbReference type="EMBL" id="BAA25690.1"/>
    </source>
</evidence>
<evidence type="ECO:0000312" key="10">
    <source>
        <dbReference type="EMBL" id="BAA25692.1"/>
    </source>
</evidence>
<evidence type="ECO:0000312" key="11">
    <source>
        <dbReference type="EMBL" id="BAD77829.1"/>
    </source>
</evidence>
<evidence type="ECO:0000312" key="12">
    <source>
        <dbReference type="RGD" id="621510"/>
    </source>
</evidence>
<dbReference type="EC" id="3.1.1.28"/>
<dbReference type="EC" id="3.1.1.-" evidence="5"/>
<dbReference type="EMBL" id="AB010570">
    <property type="protein sequence ID" value="BAA25690.1"/>
    <property type="molecule type" value="Genomic_DNA"/>
</dbReference>
<dbReference type="EMBL" id="AB010635">
    <property type="protein sequence ID" value="BAA25692.1"/>
    <property type="molecule type" value="mRNA"/>
</dbReference>
<dbReference type="EMBL" id="AB191005">
    <property type="protein sequence ID" value="BAD77829.1"/>
    <property type="molecule type" value="mRNA"/>
</dbReference>
<dbReference type="EMBL" id="AABR07007139">
    <property type="status" value="NOT_ANNOTATED_CDS"/>
    <property type="molecule type" value="Genomic_DNA"/>
</dbReference>
<dbReference type="EMBL" id="AABR07007140">
    <property type="status" value="NOT_ANNOTATED_CDS"/>
    <property type="molecule type" value="Genomic_DNA"/>
</dbReference>
<dbReference type="EMBL" id="AABR07007141">
    <property type="status" value="NOT_ANNOTATED_CDS"/>
    <property type="molecule type" value="Genomic_DNA"/>
</dbReference>
<dbReference type="EMBL" id="AABR07007143">
    <property type="status" value="NOT_ANNOTATED_CDS"/>
    <property type="molecule type" value="Genomic_DNA"/>
</dbReference>
<dbReference type="EMBL" id="AABR07007142">
    <property type="status" value="NOT_ANNOTATED_CDS"/>
    <property type="molecule type" value="Genomic_DNA"/>
</dbReference>
<dbReference type="EMBL" id="AABR07007144">
    <property type="status" value="NOT_ANNOTATED_CDS"/>
    <property type="molecule type" value="Genomic_DNA"/>
</dbReference>
<dbReference type="EMBL" id="CH473986">
    <property type="protein sequence ID" value="EDL94590.1"/>
    <property type="molecule type" value="Genomic_DNA"/>
</dbReference>
<dbReference type="RefSeq" id="NP_598270.2">
    <property type="nucleotide sequence ID" value="NM_133586.3"/>
</dbReference>
<dbReference type="RefSeq" id="XP_017445895.1">
    <property type="nucleotide sequence ID" value="XM_017590406.1"/>
</dbReference>
<dbReference type="RefSeq" id="XP_017445925.1">
    <property type="nucleotide sequence ID" value="XM_017590436.1"/>
</dbReference>
<dbReference type="SMR" id="O70631"/>
<dbReference type="FunCoup" id="O70631">
    <property type="interactions" value="77"/>
</dbReference>
<dbReference type="ESTHER" id="ratno-pbcxe">
    <property type="family name" value="Carb_B_Chordata"/>
</dbReference>
<dbReference type="MEROPS" id="S09.999"/>
<dbReference type="PhosphoSitePlus" id="O70631"/>
<dbReference type="PaxDb" id="10116-ENSRNOP00000043426"/>
<dbReference type="GeneID" id="171118"/>
<dbReference type="KEGG" id="rno:171118"/>
<dbReference type="AGR" id="RGD:621510"/>
<dbReference type="CTD" id="234671"/>
<dbReference type="RGD" id="621510">
    <property type="gene designation" value="Ces2c"/>
</dbReference>
<dbReference type="VEuPathDB" id="HostDB:ENSRNOG00000048823"/>
<dbReference type="VEuPathDB" id="HostDB:ENSRNOG00000069933"/>
<dbReference type="eggNOG" id="KOG1516">
    <property type="taxonomic scope" value="Eukaryota"/>
</dbReference>
<dbReference type="InParanoid" id="O70631"/>
<dbReference type="PhylomeDB" id="O70631"/>
<dbReference type="TreeFam" id="TF315470"/>
<dbReference type="BRENDA" id="3.1.1.1">
    <property type="organism ID" value="5301"/>
</dbReference>
<dbReference type="PRO" id="PR:O70631"/>
<dbReference type="Proteomes" id="UP000002494">
    <property type="component" value="Chromosome 19"/>
</dbReference>
<dbReference type="Proteomes" id="UP000234681">
    <property type="component" value="Chromosome 1"/>
</dbReference>
<dbReference type="Bgee" id="ENSRNOG00000036571">
    <property type="expression patterns" value="Expressed in duodenum and 16 other cell types or tissues"/>
</dbReference>
<dbReference type="GO" id="GO:0005783">
    <property type="term" value="C:endoplasmic reticulum"/>
    <property type="evidence" value="ECO:0007669"/>
    <property type="project" value="UniProtKB-SubCell"/>
</dbReference>
<dbReference type="GO" id="GO:0043231">
    <property type="term" value="C:intracellular membrane-bounded organelle"/>
    <property type="evidence" value="ECO:0000314"/>
    <property type="project" value="UniProtKB"/>
</dbReference>
<dbReference type="GO" id="GO:0047619">
    <property type="term" value="F:acylcarnitine hydrolase activity"/>
    <property type="evidence" value="ECO:0000266"/>
    <property type="project" value="RGD"/>
</dbReference>
<dbReference type="GO" id="GO:0047376">
    <property type="term" value="F:all-trans-retinyl-palmitate hydrolase, all-trans-retinol forming activity"/>
    <property type="evidence" value="ECO:0007669"/>
    <property type="project" value="RHEA"/>
</dbReference>
<dbReference type="GO" id="GO:0052689">
    <property type="term" value="F:carboxylic ester hydrolase activity"/>
    <property type="evidence" value="ECO:0000318"/>
    <property type="project" value="GO_Central"/>
</dbReference>
<dbReference type="GO" id="GO:0050253">
    <property type="term" value="F:retinyl-palmitate esterase activity"/>
    <property type="evidence" value="ECO:0000314"/>
    <property type="project" value="UniProtKB"/>
</dbReference>
<dbReference type="GO" id="GO:0001523">
    <property type="term" value="P:retinoid metabolic process"/>
    <property type="evidence" value="ECO:0000304"/>
    <property type="project" value="UniProtKB"/>
</dbReference>
<dbReference type="CDD" id="cd00312">
    <property type="entry name" value="Esterase_lipase"/>
    <property type="match status" value="1"/>
</dbReference>
<dbReference type="FunFam" id="3.40.50.1820:FF:000011">
    <property type="entry name" value="Carboxylic ester hydrolase"/>
    <property type="match status" value="1"/>
</dbReference>
<dbReference type="Gene3D" id="3.40.50.1820">
    <property type="entry name" value="alpha/beta hydrolase"/>
    <property type="match status" value="1"/>
</dbReference>
<dbReference type="InterPro" id="IPR029058">
    <property type="entry name" value="AB_hydrolase_fold"/>
</dbReference>
<dbReference type="InterPro" id="IPR002018">
    <property type="entry name" value="CarbesteraseB"/>
</dbReference>
<dbReference type="InterPro" id="IPR019826">
    <property type="entry name" value="Carboxylesterase_B_AS"/>
</dbReference>
<dbReference type="InterPro" id="IPR019819">
    <property type="entry name" value="Carboxylesterase_B_CS"/>
</dbReference>
<dbReference type="InterPro" id="IPR050309">
    <property type="entry name" value="Type-B_Carboxylest/Lipase"/>
</dbReference>
<dbReference type="PANTHER" id="PTHR11559">
    <property type="entry name" value="CARBOXYLESTERASE"/>
    <property type="match status" value="1"/>
</dbReference>
<dbReference type="Pfam" id="PF00135">
    <property type="entry name" value="COesterase"/>
    <property type="match status" value="1"/>
</dbReference>
<dbReference type="SUPFAM" id="SSF53474">
    <property type="entry name" value="alpha/beta-Hydrolases"/>
    <property type="match status" value="1"/>
</dbReference>
<dbReference type="PROSITE" id="PS00122">
    <property type="entry name" value="CARBOXYLESTERASE_B_1"/>
    <property type="match status" value="1"/>
</dbReference>
<dbReference type="PROSITE" id="PS00941">
    <property type="entry name" value="CARBOXYLESTERASE_B_2"/>
    <property type="match status" value="1"/>
</dbReference>
<comment type="function">
    <text evidence="2 6">Hydrolase with high activity towards palmitoylcarnitine. Is also active with p-nitrophenylacetate and alpha-naphthylacetate (By similarity). May also hydrolyze retinyl esters (PubMed:12230550).</text>
</comment>
<comment type="catalytic activity">
    <reaction evidence="8">
        <text>all-trans-retinyl hexadecanoate + H2O = all-trans-retinol + hexadecanoate + H(+)</text>
        <dbReference type="Rhea" id="RHEA:13933"/>
        <dbReference type="ChEBI" id="CHEBI:7896"/>
        <dbReference type="ChEBI" id="CHEBI:15377"/>
        <dbReference type="ChEBI" id="CHEBI:15378"/>
        <dbReference type="ChEBI" id="CHEBI:17336"/>
        <dbReference type="ChEBI" id="CHEBI:17616"/>
    </reaction>
    <physiologicalReaction direction="left-to-right" evidence="8">
        <dbReference type="Rhea" id="RHEA:13934"/>
    </physiologicalReaction>
</comment>
<comment type="catalytic activity">
    <reaction evidence="2">
        <text>an O-acyl-(R)-carnitine + H2O = (R)-carnitine + a fatty acid + H(+)</text>
        <dbReference type="Rhea" id="RHEA:17101"/>
        <dbReference type="ChEBI" id="CHEBI:15377"/>
        <dbReference type="ChEBI" id="CHEBI:15378"/>
        <dbReference type="ChEBI" id="CHEBI:16347"/>
        <dbReference type="ChEBI" id="CHEBI:28868"/>
        <dbReference type="ChEBI" id="CHEBI:75659"/>
        <dbReference type="EC" id="3.1.1.28"/>
    </reaction>
</comment>
<comment type="subcellular location">
    <subcellularLocation>
        <location evidence="6">Microsome</location>
    </subcellularLocation>
    <subcellularLocation>
        <location evidence="2">Endoplasmic reticulum</location>
    </subcellularLocation>
</comment>
<comment type="tissue specificity">
    <text evidence="6">Expressed in liver, stomach and kidney.</text>
</comment>
<comment type="similarity">
    <text evidence="3 5">Belongs to the type-B carboxylesterase/lipase family.</text>
</comment>
<name>EST2C_RAT</name>